<gene>
    <name evidence="2" type="primary">nuoB</name>
    <name type="ordered locus">Dshi_1308</name>
</gene>
<organism>
    <name type="scientific">Dinoroseobacter shibae (strain DSM 16493 / NCIMB 14021 / DFL 12)</name>
    <dbReference type="NCBI Taxonomy" id="398580"/>
    <lineage>
        <taxon>Bacteria</taxon>
        <taxon>Pseudomonadati</taxon>
        <taxon>Pseudomonadota</taxon>
        <taxon>Alphaproteobacteria</taxon>
        <taxon>Rhodobacterales</taxon>
        <taxon>Roseobacteraceae</taxon>
        <taxon>Dinoroseobacter</taxon>
    </lineage>
</organism>
<dbReference type="EC" id="7.1.1.-" evidence="2"/>
<dbReference type="EMBL" id="CP000830">
    <property type="protein sequence ID" value="ABV93050.1"/>
    <property type="molecule type" value="Genomic_DNA"/>
</dbReference>
<dbReference type="RefSeq" id="WP_012177980.1">
    <property type="nucleotide sequence ID" value="NC_009952.1"/>
</dbReference>
<dbReference type="SMR" id="A8LIT6"/>
<dbReference type="STRING" id="398580.Dshi_1308"/>
<dbReference type="KEGG" id="dsh:Dshi_1308"/>
<dbReference type="eggNOG" id="COG0377">
    <property type="taxonomic scope" value="Bacteria"/>
</dbReference>
<dbReference type="HOGENOM" id="CLU_055737_7_0_5"/>
<dbReference type="OrthoDB" id="9786737at2"/>
<dbReference type="Proteomes" id="UP000006833">
    <property type="component" value="Chromosome"/>
</dbReference>
<dbReference type="GO" id="GO:0005886">
    <property type="term" value="C:plasma membrane"/>
    <property type="evidence" value="ECO:0007669"/>
    <property type="project" value="UniProtKB-SubCell"/>
</dbReference>
<dbReference type="GO" id="GO:0045271">
    <property type="term" value="C:respiratory chain complex I"/>
    <property type="evidence" value="ECO:0007669"/>
    <property type="project" value="TreeGrafter"/>
</dbReference>
<dbReference type="GO" id="GO:0051539">
    <property type="term" value="F:4 iron, 4 sulfur cluster binding"/>
    <property type="evidence" value="ECO:0007669"/>
    <property type="project" value="UniProtKB-KW"/>
</dbReference>
<dbReference type="GO" id="GO:0005506">
    <property type="term" value="F:iron ion binding"/>
    <property type="evidence" value="ECO:0007669"/>
    <property type="project" value="UniProtKB-UniRule"/>
</dbReference>
<dbReference type="GO" id="GO:0008137">
    <property type="term" value="F:NADH dehydrogenase (ubiquinone) activity"/>
    <property type="evidence" value="ECO:0007669"/>
    <property type="project" value="InterPro"/>
</dbReference>
<dbReference type="GO" id="GO:0050136">
    <property type="term" value="F:NADH:ubiquinone reductase (non-electrogenic) activity"/>
    <property type="evidence" value="ECO:0007669"/>
    <property type="project" value="UniProtKB-UniRule"/>
</dbReference>
<dbReference type="GO" id="GO:0048038">
    <property type="term" value="F:quinone binding"/>
    <property type="evidence" value="ECO:0007669"/>
    <property type="project" value="UniProtKB-KW"/>
</dbReference>
<dbReference type="GO" id="GO:0009060">
    <property type="term" value="P:aerobic respiration"/>
    <property type="evidence" value="ECO:0007669"/>
    <property type="project" value="TreeGrafter"/>
</dbReference>
<dbReference type="GO" id="GO:0015990">
    <property type="term" value="P:electron transport coupled proton transport"/>
    <property type="evidence" value="ECO:0007669"/>
    <property type="project" value="TreeGrafter"/>
</dbReference>
<dbReference type="FunFam" id="3.40.50.12280:FF:000001">
    <property type="entry name" value="NADH-quinone oxidoreductase subunit B 2"/>
    <property type="match status" value="1"/>
</dbReference>
<dbReference type="Gene3D" id="3.40.50.12280">
    <property type="match status" value="1"/>
</dbReference>
<dbReference type="HAMAP" id="MF_01356">
    <property type="entry name" value="NDH1_NuoB"/>
    <property type="match status" value="1"/>
</dbReference>
<dbReference type="InterPro" id="IPR006137">
    <property type="entry name" value="NADH_UbQ_OxRdtase-like_20kDa"/>
</dbReference>
<dbReference type="InterPro" id="IPR006138">
    <property type="entry name" value="NADH_UQ_OxRdtase_20Kd_su"/>
</dbReference>
<dbReference type="NCBIfam" id="TIGR01957">
    <property type="entry name" value="nuoB_fam"/>
    <property type="match status" value="1"/>
</dbReference>
<dbReference type="NCBIfam" id="NF005012">
    <property type="entry name" value="PRK06411.1"/>
    <property type="match status" value="1"/>
</dbReference>
<dbReference type="PANTHER" id="PTHR11995">
    <property type="entry name" value="NADH DEHYDROGENASE"/>
    <property type="match status" value="1"/>
</dbReference>
<dbReference type="PANTHER" id="PTHR11995:SF14">
    <property type="entry name" value="NADH DEHYDROGENASE [UBIQUINONE] IRON-SULFUR PROTEIN 7, MITOCHONDRIAL"/>
    <property type="match status" value="1"/>
</dbReference>
<dbReference type="Pfam" id="PF01058">
    <property type="entry name" value="Oxidored_q6"/>
    <property type="match status" value="1"/>
</dbReference>
<dbReference type="SUPFAM" id="SSF56770">
    <property type="entry name" value="HydA/Nqo6-like"/>
    <property type="match status" value="1"/>
</dbReference>
<dbReference type="PROSITE" id="PS01150">
    <property type="entry name" value="COMPLEX1_20K"/>
    <property type="match status" value="1"/>
</dbReference>
<accession>A8LIT6</accession>
<keyword id="KW-0004">4Fe-4S</keyword>
<keyword id="KW-0997">Cell inner membrane</keyword>
<keyword id="KW-1003">Cell membrane</keyword>
<keyword id="KW-0408">Iron</keyword>
<keyword id="KW-0411">Iron-sulfur</keyword>
<keyword id="KW-0472">Membrane</keyword>
<keyword id="KW-0479">Metal-binding</keyword>
<keyword id="KW-0520">NAD</keyword>
<keyword id="KW-0874">Quinone</keyword>
<keyword id="KW-1185">Reference proteome</keyword>
<keyword id="KW-1278">Translocase</keyword>
<keyword id="KW-0813">Transport</keyword>
<keyword id="KW-0830">Ubiquinone</keyword>
<proteinExistence type="inferred from homology"/>
<evidence type="ECO:0000250" key="1"/>
<evidence type="ECO:0000255" key="2">
    <source>
        <dbReference type="HAMAP-Rule" id="MF_01356"/>
    </source>
</evidence>
<feature type="chain" id="PRO_0000358404" description="NADH-quinone oxidoreductase subunit B">
    <location>
        <begin position="1"/>
        <end position="177"/>
    </location>
</feature>
<feature type="binding site" evidence="2">
    <location>
        <position position="56"/>
    </location>
    <ligand>
        <name>[4Fe-4S] cluster</name>
        <dbReference type="ChEBI" id="CHEBI:49883"/>
    </ligand>
</feature>
<feature type="binding site" evidence="2">
    <location>
        <position position="57"/>
    </location>
    <ligand>
        <name>[4Fe-4S] cluster</name>
        <dbReference type="ChEBI" id="CHEBI:49883"/>
    </ligand>
</feature>
<feature type="binding site" evidence="2">
    <location>
        <position position="121"/>
    </location>
    <ligand>
        <name>[4Fe-4S] cluster</name>
        <dbReference type="ChEBI" id="CHEBI:49883"/>
    </ligand>
</feature>
<feature type="binding site" evidence="2">
    <location>
        <position position="151"/>
    </location>
    <ligand>
        <name>[4Fe-4S] cluster</name>
        <dbReference type="ChEBI" id="CHEBI:49883"/>
    </ligand>
</feature>
<reference key="1">
    <citation type="journal article" date="2010" name="ISME J.">
        <title>The complete genome sequence of the algal symbiont Dinoroseobacter shibae: a hitchhiker's guide to life in the sea.</title>
        <authorList>
            <person name="Wagner-Dobler I."/>
            <person name="Ballhausen B."/>
            <person name="Berger M."/>
            <person name="Brinkhoff T."/>
            <person name="Buchholz I."/>
            <person name="Bunk B."/>
            <person name="Cypionka H."/>
            <person name="Daniel R."/>
            <person name="Drepper T."/>
            <person name="Gerdts G."/>
            <person name="Hahnke S."/>
            <person name="Han C."/>
            <person name="Jahn D."/>
            <person name="Kalhoefer D."/>
            <person name="Kiss H."/>
            <person name="Klenk H.P."/>
            <person name="Kyrpides N."/>
            <person name="Liebl W."/>
            <person name="Liesegang H."/>
            <person name="Meincke L."/>
            <person name="Pati A."/>
            <person name="Petersen J."/>
            <person name="Piekarski T."/>
            <person name="Pommerenke C."/>
            <person name="Pradella S."/>
            <person name="Pukall R."/>
            <person name="Rabus R."/>
            <person name="Stackebrandt E."/>
            <person name="Thole S."/>
            <person name="Thompson L."/>
            <person name="Tielen P."/>
            <person name="Tomasch J."/>
            <person name="von Jan M."/>
            <person name="Wanphrut N."/>
            <person name="Wichels A."/>
            <person name="Zech H."/>
            <person name="Simon M."/>
        </authorList>
    </citation>
    <scope>NUCLEOTIDE SEQUENCE [LARGE SCALE GENOMIC DNA]</scope>
    <source>
        <strain>DSM 16493 / NCIMB 14021 / DFL 12</strain>
    </source>
</reference>
<name>NUOB_DINSH</name>
<comment type="function">
    <text evidence="1">NDH-1 shuttles electrons from NADH, via FMN and iron-sulfur (Fe-S) centers, to quinones in the respiratory chain. Couples the redox reaction to proton translocation (for every two electrons transferred, four hydrogen ions are translocated across the cytoplasmic membrane), and thus conserves the redox energy in a proton gradient (By similarity).</text>
</comment>
<comment type="catalytic activity">
    <reaction evidence="2">
        <text>a quinone + NADH + 5 H(+)(in) = a quinol + NAD(+) + 4 H(+)(out)</text>
        <dbReference type="Rhea" id="RHEA:57888"/>
        <dbReference type="ChEBI" id="CHEBI:15378"/>
        <dbReference type="ChEBI" id="CHEBI:24646"/>
        <dbReference type="ChEBI" id="CHEBI:57540"/>
        <dbReference type="ChEBI" id="CHEBI:57945"/>
        <dbReference type="ChEBI" id="CHEBI:132124"/>
    </reaction>
</comment>
<comment type="cofactor">
    <cofactor evidence="2">
        <name>[4Fe-4S] cluster</name>
        <dbReference type="ChEBI" id="CHEBI:49883"/>
    </cofactor>
    <text evidence="2">Binds 1 [4Fe-4S] cluster.</text>
</comment>
<comment type="subunit">
    <text evidence="2">NDH-1 is composed of 14 different subunits. Subunits NuoB, C, D, E, F, and G constitute the peripheral sector of the complex.</text>
</comment>
<comment type="subcellular location">
    <subcellularLocation>
        <location evidence="2">Cell inner membrane</location>
        <topology evidence="2">Peripheral membrane protein</topology>
        <orientation evidence="2">Cytoplasmic side</orientation>
    </subcellularLocation>
</comment>
<comment type="similarity">
    <text evidence="2">Belongs to the complex I 20 kDa subunit family.</text>
</comment>
<sequence>MGVSTAAYDAGPDKEHATQLLNNELQDKGFLLTSTEDIINWARTGSLHWMTFGLACCAVEMMHTSMPRYDAERFGIAPRASPRQSDVMIVAGTLTNKMAPALRKVYDQMPEPRYVISMGSCANGGGYYHYSYSVVRGCDRVVPVDIYVPGCPPTAEALLYGLLQLQRKIRRTGTIVR</sequence>
<protein>
    <recommendedName>
        <fullName evidence="2">NADH-quinone oxidoreductase subunit B</fullName>
        <ecNumber evidence="2">7.1.1.-</ecNumber>
    </recommendedName>
    <alternativeName>
        <fullName evidence="2">NADH dehydrogenase I subunit B</fullName>
    </alternativeName>
    <alternativeName>
        <fullName evidence="2">NDH-1 subunit B</fullName>
    </alternativeName>
</protein>